<organism>
    <name type="scientific">Methanococcus vannielii (strain ATCC 35089 / DSM 1224 / JCM 13029 / OCM 148 / SB)</name>
    <dbReference type="NCBI Taxonomy" id="406327"/>
    <lineage>
        <taxon>Archaea</taxon>
        <taxon>Methanobacteriati</taxon>
        <taxon>Methanobacteriota</taxon>
        <taxon>Methanomada group</taxon>
        <taxon>Methanococci</taxon>
        <taxon>Methanococcales</taxon>
        <taxon>Methanococcaceae</taxon>
        <taxon>Methanococcus</taxon>
    </lineage>
</organism>
<keyword id="KW-0067">ATP-binding</keyword>
<keyword id="KW-0436">Ligase</keyword>
<keyword id="KW-0460">Magnesium</keyword>
<keyword id="KW-0464">Manganese</keyword>
<keyword id="KW-0479">Metal-binding</keyword>
<keyword id="KW-0547">Nucleotide-binding</keyword>
<keyword id="KW-0658">Purine biosynthesis</keyword>
<name>PURP_METVS</name>
<feature type="chain" id="PRO_0000148028" description="5-formaminoimidazole-4-carboxamide-1-(beta)-D-ribofuranosyl 5'-monophosphate synthetase">
    <location>
        <begin position="1"/>
        <end position="361"/>
    </location>
</feature>
<feature type="domain" description="ATP-grasp" evidence="2">
    <location>
        <begin position="116"/>
        <end position="348"/>
    </location>
</feature>
<feature type="binding site" evidence="2">
    <location>
        <position position="27"/>
    </location>
    <ligand>
        <name>5-amino-1-(5-phospho-beta-D-ribosyl)imidazole-4-carboxamide</name>
        <dbReference type="ChEBI" id="CHEBI:58475"/>
    </ligand>
</feature>
<feature type="binding site" evidence="2">
    <location>
        <position position="94"/>
    </location>
    <ligand>
        <name>5-amino-1-(5-phospho-beta-D-ribosyl)imidazole-4-carboxamide</name>
        <dbReference type="ChEBI" id="CHEBI:58475"/>
    </ligand>
</feature>
<feature type="binding site" evidence="2">
    <location>
        <begin position="146"/>
        <end position="208"/>
    </location>
    <ligand>
        <name>ATP</name>
        <dbReference type="ChEBI" id="CHEBI:30616"/>
    </ligand>
</feature>
<feature type="binding site" evidence="2">
    <location>
        <position position="230"/>
    </location>
    <ligand>
        <name>ATP</name>
        <dbReference type="ChEBI" id="CHEBI:30616"/>
    </ligand>
</feature>
<feature type="binding site" evidence="2">
    <location>
        <position position="258"/>
    </location>
    <ligand>
        <name>5-amino-1-(5-phospho-beta-D-ribosyl)imidazole-4-carboxamide</name>
        <dbReference type="ChEBI" id="CHEBI:58475"/>
    </ligand>
</feature>
<feature type="binding site" evidence="2">
    <location>
        <position position="297"/>
    </location>
    <ligand>
        <name>Mg(2+)</name>
        <dbReference type="ChEBI" id="CHEBI:18420"/>
    </ligand>
</feature>
<feature type="binding site" evidence="2">
    <location>
        <position position="310"/>
    </location>
    <ligand>
        <name>Mg(2+)</name>
        <dbReference type="ChEBI" id="CHEBI:18420"/>
    </ligand>
</feature>
<proteinExistence type="inferred from homology"/>
<sequence length="361" mass="40683">MIPKEEIMGIFEKYNKDEITIATVGSHTSLHILKGAKLEGFSTAVITTKDRDVPYKRFGVADKFIYVDKFSDISSEEIQEQLREMNAIVVPHGSFIAYCGLDNVESTFKVPMFGNRAILRWEAERDLEGQLLGGSGLRLPKKYNSPDEIDGPVMVKFPGARGGRGYFPCSSTEEFWRKINDFKAKGVLSEEDVKKAHIEEYVVGANYCIHYFYSPLKDRVELMGIDRRYESSIDGLVRVPSKDQLELDIDPSYVITGNFPVVIRESLLPQVFDMGDKLCKKAEELVKPGMLGPFCLQSLCTENLELVVFEMSARSDGGNNTFMNGSPYSYLYNAEPLSMGQRIAKEIKLALELKMIEKVIS</sequence>
<gene>
    <name evidence="2" type="primary">purP</name>
    <name type="ordered locus">Mevan_0683</name>
</gene>
<reference key="1">
    <citation type="journal article" date="1989" name="J. Mol. Evol.">
        <title>Organization and nucleotide sequence of a transcriptional unit of Methanococcus vannielii comprising genes for protein synthesis elongation factors and ribosomal proteins.</title>
        <authorList>
            <person name="Lechner K."/>
            <person name="Heller G."/>
            <person name="Boeck A."/>
        </authorList>
    </citation>
    <scope>NUCLEOTIDE SEQUENCE [GENOMIC DNA]</scope>
</reference>
<reference key="2">
    <citation type="submission" date="2007-06" db="EMBL/GenBank/DDBJ databases">
        <title>Complete sequence of Methanococcus vannielii SB.</title>
        <authorList>
            <consortium name="US DOE Joint Genome Institute"/>
            <person name="Copeland A."/>
            <person name="Lucas S."/>
            <person name="Lapidus A."/>
            <person name="Barry K."/>
            <person name="Glavina del Rio T."/>
            <person name="Dalin E."/>
            <person name="Tice H."/>
            <person name="Pitluck S."/>
            <person name="Chain P."/>
            <person name="Malfatti S."/>
            <person name="Shin M."/>
            <person name="Vergez L."/>
            <person name="Schmutz J."/>
            <person name="Larimer F."/>
            <person name="Land M."/>
            <person name="Hauser L."/>
            <person name="Kyrpides N."/>
            <person name="Anderson I."/>
            <person name="Sieprawska-Lupa M."/>
            <person name="Whitman W.B."/>
            <person name="Richardson P."/>
        </authorList>
    </citation>
    <scope>NUCLEOTIDE SEQUENCE [LARGE SCALE GENOMIC DNA]</scope>
    <source>
        <strain>ATCC 35089 / DSM 1224 / JCM 13029 / OCM 148 / SB</strain>
    </source>
</reference>
<evidence type="ECO:0000250" key="1"/>
<evidence type="ECO:0000255" key="2">
    <source>
        <dbReference type="HAMAP-Rule" id="MF_01163"/>
    </source>
</evidence>
<evidence type="ECO:0000305" key="3"/>
<comment type="function">
    <text evidence="2">Catalyzes the ATP- and formate-dependent formylation of 5-aminoimidazole-4-carboxamide-1-beta-d-ribofuranosyl 5'-monophosphate (AICAR) to 5-formaminoimidazole-4-carboxamide-1-beta-d-ribofuranosyl 5'-monophosphate (FAICAR) in the absence of folates.</text>
</comment>
<comment type="catalytic activity">
    <reaction evidence="2">
        <text>5-amino-1-(5-phospho-beta-D-ribosyl)imidazole-4-carboxamide + formate + ATP = 5-formamido-1-(5-phospho-D-ribosyl)imidazole-4-carboxamide + ADP + phosphate</text>
        <dbReference type="Rhea" id="RHEA:24836"/>
        <dbReference type="ChEBI" id="CHEBI:15740"/>
        <dbReference type="ChEBI" id="CHEBI:30616"/>
        <dbReference type="ChEBI" id="CHEBI:43474"/>
        <dbReference type="ChEBI" id="CHEBI:58467"/>
        <dbReference type="ChEBI" id="CHEBI:58475"/>
        <dbReference type="ChEBI" id="CHEBI:456216"/>
        <dbReference type="EC" id="6.3.4.23"/>
    </reaction>
</comment>
<comment type="cofactor">
    <cofactor evidence="1">
        <name>Mg(2+)</name>
        <dbReference type="ChEBI" id="CHEBI:18420"/>
    </cofactor>
    <cofactor evidence="1">
        <name>Mn(2+)</name>
        <dbReference type="ChEBI" id="CHEBI:29035"/>
    </cofactor>
    <text evidence="1">Binds 1 Mg(2+) or Mn(2+) ion per subunit.</text>
</comment>
<comment type="pathway">
    <text evidence="2">Purine metabolism; IMP biosynthesis via de novo pathway; 5-formamido-1-(5-phospho-D-ribosyl)imidazole-4-carboxamide from 5-amino-1-(5-phospho-D-ribosyl)imidazole-4-carboxamide (formate route): step 1/1.</text>
</comment>
<comment type="similarity">
    <text evidence="2">Belongs to the phosphohexose mutase family.</text>
</comment>
<comment type="sequence caution" evidence="3">
    <conflict type="miscellaneous discrepancy">
        <sequence resource="EMBL-CDS" id="CAA34094"/>
    </conflict>
</comment>
<comment type="sequence caution" evidence="3">
    <conflict type="miscellaneous discrepancy">
        <sequence resource="EMBL-CDS" id="CAA34095"/>
    </conflict>
</comment>
<accession>P14027</accession>
<accession>A6UQ17</accession>
<accession>P14028</accession>
<protein>
    <recommendedName>
        <fullName evidence="2">5-formaminoimidazole-4-carboxamide-1-(beta)-D-ribofuranosyl 5'-monophosphate synthetase</fullName>
        <ecNumber evidence="2">6.3.4.23</ecNumber>
    </recommendedName>
    <alternativeName>
        <fullName evidence="2">5-aminoimidazole-4-carboxamide-1-beta-D-ribofuranosyl 5'-monophosphate--formate ligase</fullName>
    </alternativeName>
</protein>
<dbReference type="EC" id="6.3.4.23" evidence="2"/>
<dbReference type="EMBL" id="X15972">
    <property type="protein sequence ID" value="CAA34094.1"/>
    <property type="status" value="ALT_SEQ"/>
    <property type="molecule type" value="Genomic_DNA"/>
</dbReference>
<dbReference type="EMBL" id="X15972">
    <property type="protein sequence ID" value="CAA34095.1"/>
    <property type="status" value="ALT_SEQ"/>
    <property type="molecule type" value="Genomic_DNA"/>
</dbReference>
<dbReference type="EMBL" id="CP000742">
    <property type="protein sequence ID" value="ABR54589.1"/>
    <property type="molecule type" value="Genomic_DNA"/>
</dbReference>
<dbReference type="PIR" id="S06626">
    <property type="entry name" value="QQMX3"/>
</dbReference>
<dbReference type="PIR" id="S06627">
    <property type="entry name" value="QQMX4"/>
</dbReference>
<dbReference type="RefSeq" id="WP_011972491.1">
    <property type="nucleotide sequence ID" value="NC_009634.1"/>
</dbReference>
<dbReference type="SMR" id="P14027"/>
<dbReference type="STRING" id="406327.Mevan_0683"/>
<dbReference type="GeneID" id="5324980"/>
<dbReference type="KEGG" id="mvn:Mevan_0683"/>
<dbReference type="eggNOG" id="arCOG04346">
    <property type="taxonomic scope" value="Archaea"/>
</dbReference>
<dbReference type="HOGENOM" id="CLU_065084_0_0_2"/>
<dbReference type="OrthoDB" id="98133at2157"/>
<dbReference type="UniPathway" id="UPA00074">
    <property type="reaction ID" value="UER00134"/>
</dbReference>
<dbReference type="Proteomes" id="UP000001107">
    <property type="component" value="Chromosome"/>
</dbReference>
<dbReference type="GO" id="GO:0005524">
    <property type="term" value="F:ATP binding"/>
    <property type="evidence" value="ECO:0007669"/>
    <property type="project" value="UniProtKB-KW"/>
</dbReference>
<dbReference type="GO" id="GO:0016879">
    <property type="term" value="F:ligase activity, forming carbon-nitrogen bonds"/>
    <property type="evidence" value="ECO:0007669"/>
    <property type="project" value="UniProtKB-UniRule"/>
</dbReference>
<dbReference type="GO" id="GO:0000287">
    <property type="term" value="F:magnesium ion binding"/>
    <property type="evidence" value="ECO:0007669"/>
    <property type="project" value="InterPro"/>
</dbReference>
<dbReference type="GO" id="GO:0006189">
    <property type="term" value="P:'de novo' IMP biosynthetic process"/>
    <property type="evidence" value="ECO:0007669"/>
    <property type="project" value="UniProtKB-UniRule"/>
</dbReference>
<dbReference type="Gene3D" id="3.40.50.20">
    <property type="match status" value="1"/>
</dbReference>
<dbReference type="Gene3D" id="3.30.1490.20">
    <property type="entry name" value="ATP-grasp fold, A domain"/>
    <property type="match status" value="1"/>
</dbReference>
<dbReference type="Gene3D" id="3.30.470.20">
    <property type="entry name" value="ATP-grasp fold, B domain"/>
    <property type="match status" value="1"/>
</dbReference>
<dbReference type="HAMAP" id="MF_01163">
    <property type="entry name" value="IMP_biosynth_PurP"/>
    <property type="match status" value="1"/>
</dbReference>
<dbReference type="InterPro" id="IPR011761">
    <property type="entry name" value="ATP-grasp"/>
</dbReference>
<dbReference type="InterPro" id="IPR013815">
    <property type="entry name" value="ATP_grasp_subdomain_1"/>
</dbReference>
<dbReference type="InterPro" id="IPR023656">
    <property type="entry name" value="IMP_biosynth_PurP"/>
</dbReference>
<dbReference type="InterPro" id="IPR009720">
    <property type="entry name" value="IMP_biosynth_PurP_C"/>
</dbReference>
<dbReference type="InterPro" id="IPR010672">
    <property type="entry name" value="IMP_biosynth_PurP_N"/>
</dbReference>
<dbReference type="InterPro" id="IPR016185">
    <property type="entry name" value="PreATP-grasp_dom_sf"/>
</dbReference>
<dbReference type="NCBIfam" id="NF009780">
    <property type="entry name" value="PRK13278.1-5"/>
    <property type="match status" value="1"/>
</dbReference>
<dbReference type="PANTHER" id="PTHR38147:SF2">
    <property type="entry name" value="5-FORMAMINOIMIDAZOLE-4-CARBOXAMIDE-1-(BETA)-D-RIBOFURANOSYL 5'-MONOPHOSPHATE SYNTHETASE"/>
    <property type="match status" value="1"/>
</dbReference>
<dbReference type="PANTHER" id="PTHR38147">
    <property type="entry name" value="5-FORMAMINOIMIDAZOLE-4-CARBOXAMIDE-1-(BETA)-D-RIBOFURANOSYL 5'-MONOPHOSPHATE SYNTHETASE-RELATED"/>
    <property type="match status" value="1"/>
</dbReference>
<dbReference type="Pfam" id="PF06849">
    <property type="entry name" value="DUF1246"/>
    <property type="match status" value="1"/>
</dbReference>
<dbReference type="Pfam" id="PF06973">
    <property type="entry name" value="DUF1297"/>
    <property type="match status" value="1"/>
</dbReference>
<dbReference type="PIRSF" id="PIRSF004602">
    <property type="entry name" value="ATPgrasp_PurP"/>
    <property type="match status" value="1"/>
</dbReference>
<dbReference type="SUPFAM" id="SSF56059">
    <property type="entry name" value="Glutathione synthetase ATP-binding domain-like"/>
    <property type="match status" value="1"/>
</dbReference>
<dbReference type="SUPFAM" id="SSF52440">
    <property type="entry name" value="PreATP-grasp domain"/>
    <property type="match status" value="1"/>
</dbReference>
<dbReference type="PROSITE" id="PS50975">
    <property type="entry name" value="ATP_GRASP"/>
    <property type="match status" value="1"/>
</dbReference>